<protein>
    <recommendedName>
        <fullName evidence="1">HTH-type transcriptional repressor PurR</fullName>
    </recommendedName>
    <alternativeName>
        <fullName evidence="1">Pur regulon repressor</fullName>
    </alternativeName>
    <alternativeName>
        <fullName evidence="1">Purine nucleotide synthesis repressor</fullName>
    </alternativeName>
</protein>
<keyword id="KW-0238">DNA-binding</keyword>
<keyword id="KW-0658">Purine biosynthesis</keyword>
<keyword id="KW-0678">Repressor</keyword>
<keyword id="KW-0804">Transcription</keyword>
<keyword id="KW-0805">Transcription regulation</keyword>
<gene>
    <name evidence="1" type="primary">purR</name>
    <name type="ordered locus">VCM66_1661</name>
</gene>
<comment type="function">
    <text evidence="1">Is the main repressor of the genes involved in the de novo synthesis of purine nucleotides, regulating purB, purC, purEK, purF, purHD, purL, purMN and guaBA expression. PurR is allosterically activated to bind its cognate DNA by binding the purine corepressors, hypoxanthine or guanine, thereby effecting transcription repression.</text>
</comment>
<comment type="pathway">
    <text>Purine metabolism; purine nucleotide biosynthesis [regulation].</text>
</comment>
<comment type="subunit">
    <text evidence="1">Homodimer.</text>
</comment>
<comment type="domain">
    <text evidence="1">Consists of two structural and functional domains: an N-terminal DNA-binding domain, approximately the first 60 residues, and a larger C-terminal domain, approximately 280 residues, which imparts the function of corepressor binding and oligomerization.</text>
</comment>
<dbReference type="EMBL" id="CP001233">
    <property type="protein sequence ID" value="ACP05970.1"/>
    <property type="molecule type" value="Genomic_DNA"/>
</dbReference>
<dbReference type="RefSeq" id="WP_000201014.1">
    <property type="nucleotide sequence ID" value="NC_012578.1"/>
</dbReference>
<dbReference type="SMR" id="C3LN44"/>
<dbReference type="GeneID" id="69719647"/>
<dbReference type="KEGG" id="vcm:VCM66_1661"/>
<dbReference type="HOGENOM" id="CLU_037628_6_2_6"/>
<dbReference type="UniPathway" id="UPA00488"/>
<dbReference type="Proteomes" id="UP000001217">
    <property type="component" value="Chromosome I"/>
</dbReference>
<dbReference type="GO" id="GO:0003700">
    <property type="term" value="F:DNA-binding transcription factor activity"/>
    <property type="evidence" value="ECO:0007669"/>
    <property type="project" value="TreeGrafter"/>
</dbReference>
<dbReference type="GO" id="GO:0000976">
    <property type="term" value="F:transcription cis-regulatory region binding"/>
    <property type="evidence" value="ECO:0007669"/>
    <property type="project" value="TreeGrafter"/>
</dbReference>
<dbReference type="GO" id="GO:0045892">
    <property type="term" value="P:negative regulation of DNA-templated transcription"/>
    <property type="evidence" value="ECO:0007669"/>
    <property type="project" value="UniProtKB-UniRule"/>
</dbReference>
<dbReference type="GO" id="GO:0006164">
    <property type="term" value="P:purine nucleotide biosynthetic process"/>
    <property type="evidence" value="ECO:0007669"/>
    <property type="project" value="UniProtKB-UniPathway"/>
</dbReference>
<dbReference type="CDD" id="cd01392">
    <property type="entry name" value="HTH_LacI"/>
    <property type="match status" value="1"/>
</dbReference>
<dbReference type="CDD" id="cd06275">
    <property type="entry name" value="PBP1_PurR"/>
    <property type="match status" value="1"/>
</dbReference>
<dbReference type="FunFam" id="1.10.260.40:FF:000002">
    <property type="entry name" value="HTH-type transcriptional repressor PurR"/>
    <property type="match status" value="1"/>
</dbReference>
<dbReference type="FunFam" id="3.40.50.2300:FF:000319">
    <property type="entry name" value="HTH-type transcriptional repressor PurR"/>
    <property type="match status" value="1"/>
</dbReference>
<dbReference type="Gene3D" id="3.40.50.2300">
    <property type="match status" value="2"/>
</dbReference>
<dbReference type="Gene3D" id="1.10.260.40">
    <property type="entry name" value="lambda repressor-like DNA-binding domains"/>
    <property type="match status" value="1"/>
</dbReference>
<dbReference type="HAMAP" id="MF_01277">
    <property type="entry name" value="HTH_type_PurR"/>
    <property type="match status" value="1"/>
</dbReference>
<dbReference type="InterPro" id="IPR000843">
    <property type="entry name" value="HTH_LacI"/>
</dbReference>
<dbReference type="InterPro" id="IPR046335">
    <property type="entry name" value="LacI/GalR-like_sensor"/>
</dbReference>
<dbReference type="InterPro" id="IPR010982">
    <property type="entry name" value="Lambda_DNA-bd_dom_sf"/>
</dbReference>
<dbReference type="InterPro" id="IPR028082">
    <property type="entry name" value="Peripla_BP_I"/>
</dbReference>
<dbReference type="InterPro" id="IPR023588">
    <property type="entry name" value="Tscrpt_reg_HTH_PurR"/>
</dbReference>
<dbReference type="PANTHER" id="PTHR30146:SF148">
    <property type="entry name" value="HTH-TYPE TRANSCRIPTIONAL REPRESSOR PURR-RELATED"/>
    <property type="match status" value="1"/>
</dbReference>
<dbReference type="PANTHER" id="PTHR30146">
    <property type="entry name" value="LACI-RELATED TRANSCRIPTIONAL REPRESSOR"/>
    <property type="match status" value="1"/>
</dbReference>
<dbReference type="Pfam" id="PF00356">
    <property type="entry name" value="LacI"/>
    <property type="match status" value="1"/>
</dbReference>
<dbReference type="Pfam" id="PF13377">
    <property type="entry name" value="Peripla_BP_3"/>
    <property type="match status" value="1"/>
</dbReference>
<dbReference type="PRINTS" id="PR00036">
    <property type="entry name" value="HTHLACI"/>
</dbReference>
<dbReference type="SMART" id="SM00354">
    <property type="entry name" value="HTH_LACI"/>
    <property type="match status" value="1"/>
</dbReference>
<dbReference type="SUPFAM" id="SSF47413">
    <property type="entry name" value="lambda repressor-like DNA-binding domains"/>
    <property type="match status" value="1"/>
</dbReference>
<dbReference type="SUPFAM" id="SSF53822">
    <property type="entry name" value="Periplasmic binding protein-like I"/>
    <property type="match status" value="1"/>
</dbReference>
<dbReference type="PROSITE" id="PS00356">
    <property type="entry name" value="HTH_LACI_1"/>
    <property type="match status" value="1"/>
</dbReference>
<dbReference type="PROSITE" id="PS50932">
    <property type="entry name" value="HTH_LACI_2"/>
    <property type="match status" value="1"/>
</dbReference>
<sequence>MATIKDVARLAGVSTTTVSHVINKTRFVAETTQEKVMEAVKQLNYAPSAVARSLKCNTTRTIGMLVTQSTNLFFSEVIDGVESYCYRQGYTLILCNTGGIYEKQRDYIRMLAEKRVDGILVMCSDLTQELQDMLDAHKDIPKVVMDWGPETSHADKIIDNSEEGGYLATKYLTDRGHTEIACLSGHFVKAACQERIQGFRRAMAEAKLTVNEDWILEGNFECDTAVLAADKIIAMDKRPTAVFCFNDTMALGLMSRLQQKGIRIPEDMSVIGYDNIELAEYFSPPLTTVHQPKRRVGKNAFEILLERIKDKEHERRIFEMHPEIVERDTVKDLTKS</sequence>
<organism>
    <name type="scientific">Vibrio cholerae serotype O1 (strain M66-2)</name>
    <dbReference type="NCBI Taxonomy" id="579112"/>
    <lineage>
        <taxon>Bacteria</taxon>
        <taxon>Pseudomonadati</taxon>
        <taxon>Pseudomonadota</taxon>
        <taxon>Gammaproteobacteria</taxon>
        <taxon>Vibrionales</taxon>
        <taxon>Vibrionaceae</taxon>
        <taxon>Vibrio</taxon>
    </lineage>
</organism>
<accession>C3LN44</accession>
<proteinExistence type="inferred from homology"/>
<name>PURR_VIBCM</name>
<reference key="1">
    <citation type="journal article" date="2008" name="PLoS ONE">
        <title>A recalibrated molecular clock and independent origins for the cholera pandemic clones.</title>
        <authorList>
            <person name="Feng L."/>
            <person name="Reeves P.R."/>
            <person name="Lan R."/>
            <person name="Ren Y."/>
            <person name="Gao C."/>
            <person name="Zhou Z."/>
            <person name="Ren Y."/>
            <person name="Cheng J."/>
            <person name="Wang W."/>
            <person name="Wang J."/>
            <person name="Qian W."/>
            <person name="Li D."/>
            <person name="Wang L."/>
        </authorList>
    </citation>
    <scope>NUCLEOTIDE SEQUENCE [LARGE SCALE GENOMIC DNA]</scope>
    <source>
        <strain>M66-2</strain>
    </source>
</reference>
<evidence type="ECO:0000255" key="1">
    <source>
        <dbReference type="HAMAP-Rule" id="MF_01277"/>
    </source>
</evidence>
<feature type="chain" id="PRO_1000165218" description="HTH-type transcriptional repressor PurR">
    <location>
        <begin position="1"/>
        <end position="336"/>
    </location>
</feature>
<feature type="domain" description="HTH lacI-type" evidence="1">
    <location>
        <begin position="2"/>
        <end position="56"/>
    </location>
</feature>
<feature type="DNA-binding region" description="H-T-H motif" evidence="1">
    <location>
        <begin position="4"/>
        <end position="23"/>
    </location>
</feature>
<feature type="DNA-binding region" evidence="1">
    <location>
        <begin position="48"/>
        <end position="56"/>
    </location>
</feature>
<feature type="binding site" evidence="1">
    <location>
        <position position="73"/>
    </location>
    <ligand>
        <name>hypoxanthine</name>
        <dbReference type="ChEBI" id="CHEBI:17368"/>
    </ligand>
</feature>
<feature type="binding site" evidence="1">
    <location>
        <position position="189"/>
    </location>
    <ligand>
        <name>hypoxanthine</name>
        <dbReference type="ChEBI" id="CHEBI:17368"/>
    </ligand>
</feature>
<feature type="binding site" evidence="1">
    <location>
        <position position="220"/>
    </location>
    <ligand>
        <name>hypoxanthine</name>
        <dbReference type="ChEBI" id="CHEBI:17368"/>
    </ligand>
</feature>
<feature type="binding site" evidence="1">
    <location>
        <position position="274"/>
    </location>
    <ligand>
        <name>hypoxanthine</name>
        <dbReference type="ChEBI" id="CHEBI:17368"/>
    </ligand>
</feature>